<accession>Q0AF67</accession>
<keyword id="KW-0997">Cell inner membrane</keyword>
<keyword id="KW-1003">Cell membrane</keyword>
<keyword id="KW-0342">GTP-binding</keyword>
<keyword id="KW-0378">Hydrolase</keyword>
<keyword id="KW-0472">Membrane</keyword>
<keyword id="KW-0547">Nucleotide-binding</keyword>
<keyword id="KW-0648">Protein biosynthesis</keyword>
<name>LEPA_NITEC</name>
<comment type="function">
    <text evidence="1">Required for accurate and efficient protein synthesis under certain stress conditions. May act as a fidelity factor of the translation reaction, by catalyzing a one-codon backward translocation of tRNAs on improperly translocated ribosomes. Back-translocation proceeds from a post-translocation (POST) complex to a pre-translocation (PRE) complex, thus giving elongation factor G a second chance to translocate the tRNAs correctly. Binds to ribosomes in a GTP-dependent manner.</text>
</comment>
<comment type="catalytic activity">
    <reaction evidence="1">
        <text>GTP + H2O = GDP + phosphate + H(+)</text>
        <dbReference type="Rhea" id="RHEA:19669"/>
        <dbReference type="ChEBI" id="CHEBI:15377"/>
        <dbReference type="ChEBI" id="CHEBI:15378"/>
        <dbReference type="ChEBI" id="CHEBI:37565"/>
        <dbReference type="ChEBI" id="CHEBI:43474"/>
        <dbReference type="ChEBI" id="CHEBI:58189"/>
        <dbReference type="EC" id="3.6.5.n1"/>
    </reaction>
</comment>
<comment type="subcellular location">
    <subcellularLocation>
        <location evidence="1">Cell inner membrane</location>
        <topology evidence="1">Peripheral membrane protein</topology>
        <orientation evidence="1">Cytoplasmic side</orientation>
    </subcellularLocation>
</comment>
<comment type="similarity">
    <text evidence="1">Belongs to the TRAFAC class translation factor GTPase superfamily. Classic translation factor GTPase family. LepA subfamily.</text>
</comment>
<proteinExistence type="inferred from homology"/>
<sequence length="598" mass="66281">MIQHIRNFSIIAHIDHGKSTLADRIIQFCGGLSDREMEAQVLDSMDLERERGITIKAQTAALYYQAKDGVNYLLNLIDTPGHVDFSYEVSRSLSACEGALLVVDASQGVEAQTVANCYTAIEQGVEVIPVLNKIDLPAADPDRVIAEIEDIIGIEARSALHISAKTGEGISEVLEMIVARIPPPEGEIDAPLRALIIDSWFDSYVGVVMLVRVMDGILKPGSKLLLMSNKANYLCEEVGVFQPKAVNRESLSAGEVGFIISGIKDLKSAKVGDTVTLVDHPASEPLDGFKEIKPQVFAGLYPVESNQYDALRAALEKLRLNDASLHFEPETSQALGFGFRCGFLGLLHLDIVQERLEREYDMDLITTAPTVVYQVVLHDGKIVEIENPSRLPELSSIEEIREPVITATILVPEEYVGAVITLCTGKRGVQENMQYMGRQVMLVYELPLNEVVMDFFDKLKSVSRGYASLDYEFKEFRVADLVKLDILINNERVDALSLIVHRASSQQRGRELAQKMRELIPRQMFDIAVQAAIGAHIVARENVKALRKNVLAKCYGGDITRKRKLLEKQKAGKKRMKRVGNVEIPQAAFLAILQVDGK</sequence>
<feature type="chain" id="PRO_1000032025" description="Elongation factor 4">
    <location>
        <begin position="1"/>
        <end position="598"/>
    </location>
</feature>
<feature type="domain" description="tr-type G">
    <location>
        <begin position="3"/>
        <end position="185"/>
    </location>
</feature>
<feature type="binding site" evidence="1">
    <location>
        <begin position="15"/>
        <end position="20"/>
    </location>
    <ligand>
        <name>GTP</name>
        <dbReference type="ChEBI" id="CHEBI:37565"/>
    </ligand>
</feature>
<feature type="binding site" evidence="1">
    <location>
        <begin position="132"/>
        <end position="135"/>
    </location>
    <ligand>
        <name>GTP</name>
        <dbReference type="ChEBI" id="CHEBI:37565"/>
    </ligand>
</feature>
<evidence type="ECO:0000255" key="1">
    <source>
        <dbReference type="HAMAP-Rule" id="MF_00071"/>
    </source>
</evidence>
<dbReference type="EC" id="3.6.5.n1" evidence="1"/>
<dbReference type="EMBL" id="CP000450">
    <property type="protein sequence ID" value="ABI60015.1"/>
    <property type="molecule type" value="Genomic_DNA"/>
</dbReference>
<dbReference type="RefSeq" id="WP_011634821.1">
    <property type="nucleotide sequence ID" value="NC_008344.1"/>
</dbReference>
<dbReference type="SMR" id="Q0AF67"/>
<dbReference type="STRING" id="335283.Neut_1781"/>
<dbReference type="KEGG" id="net:Neut_1781"/>
<dbReference type="eggNOG" id="COG0481">
    <property type="taxonomic scope" value="Bacteria"/>
</dbReference>
<dbReference type="HOGENOM" id="CLU_009995_3_3_4"/>
<dbReference type="Proteomes" id="UP000001966">
    <property type="component" value="Chromosome"/>
</dbReference>
<dbReference type="GO" id="GO:0005886">
    <property type="term" value="C:plasma membrane"/>
    <property type="evidence" value="ECO:0007669"/>
    <property type="project" value="UniProtKB-SubCell"/>
</dbReference>
<dbReference type="GO" id="GO:0005525">
    <property type="term" value="F:GTP binding"/>
    <property type="evidence" value="ECO:0007669"/>
    <property type="project" value="UniProtKB-UniRule"/>
</dbReference>
<dbReference type="GO" id="GO:0003924">
    <property type="term" value="F:GTPase activity"/>
    <property type="evidence" value="ECO:0007669"/>
    <property type="project" value="UniProtKB-UniRule"/>
</dbReference>
<dbReference type="GO" id="GO:0097216">
    <property type="term" value="F:guanosine tetraphosphate binding"/>
    <property type="evidence" value="ECO:0007669"/>
    <property type="project" value="UniProtKB-ARBA"/>
</dbReference>
<dbReference type="GO" id="GO:0043022">
    <property type="term" value="F:ribosome binding"/>
    <property type="evidence" value="ECO:0007669"/>
    <property type="project" value="UniProtKB-UniRule"/>
</dbReference>
<dbReference type="GO" id="GO:0003746">
    <property type="term" value="F:translation elongation factor activity"/>
    <property type="evidence" value="ECO:0007669"/>
    <property type="project" value="UniProtKB-UniRule"/>
</dbReference>
<dbReference type="GO" id="GO:0045727">
    <property type="term" value="P:positive regulation of translation"/>
    <property type="evidence" value="ECO:0007669"/>
    <property type="project" value="UniProtKB-UniRule"/>
</dbReference>
<dbReference type="CDD" id="cd03699">
    <property type="entry name" value="EF4_II"/>
    <property type="match status" value="1"/>
</dbReference>
<dbReference type="CDD" id="cd16260">
    <property type="entry name" value="EF4_III"/>
    <property type="match status" value="1"/>
</dbReference>
<dbReference type="CDD" id="cd01890">
    <property type="entry name" value="LepA"/>
    <property type="match status" value="1"/>
</dbReference>
<dbReference type="CDD" id="cd03709">
    <property type="entry name" value="lepA_C"/>
    <property type="match status" value="1"/>
</dbReference>
<dbReference type="FunFam" id="3.40.50.300:FF:000078">
    <property type="entry name" value="Elongation factor 4"/>
    <property type="match status" value="1"/>
</dbReference>
<dbReference type="FunFam" id="2.40.30.10:FF:000015">
    <property type="entry name" value="Translation factor GUF1, mitochondrial"/>
    <property type="match status" value="1"/>
</dbReference>
<dbReference type="FunFam" id="3.30.70.240:FF:000007">
    <property type="entry name" value="Translation factor GUF1, mitochondrial"/>
    <property type="match status" value="1"/>
</dbReference>
<dbReference type="FunFam" id="3.30.70.2570:FF:000001">
    <property type="entry name" value="Translation factor GUF1, mitochondrial"/>
    <property type="match status" value="1"/>
</dbReference>
<dbReference type="FunFam" id="3.30.70.870:FF:000004">
    <property type="entry name" value="Translation factor GUF1, mitochondrial"/>
    <property type="match status" value="1"/>
</dbReference>
<dbReference type="Gene3D" id="3.30.70.240">
    <property type="match status" value="1"/>
</dbReference>
<dbReference type="Gene3D" id="3.30.70.2570">
    <property type="entry name" value="Elongation factor 4, C-terminal domain"/>
    <property type="match status" value="1"/>
</dbReference>
<dbReference type="Gene3D" id="3.30.70.870">
    <property type="entry name" value="Elongation Factor G (Translational Gtpase), domain 3"/>
    <property type="match status" value="1"/>
</dbReference>
<dbReference type="Gene3D" id="3.40.50.300">
    <property type="entry name" value="P-loop containing nucleotide triphosphate hydrolases"/>
    <property type="match status" value="1"/>
</dbReference>
<dbReference type="Gene3D" id="2.40.30.10">
    <property type="entry name" value="Translation factors"/>
    <property type="match status" value="1"/>
</dbReference>
<dbReference type="HAMAP" id="MF_00071">
    <property type="entry name" value="LepA"/>
    <property type="match status" value="1"/>
</dbReference>
<dbReference type="InterPro" id="IPR006297">
    <property type="entry name" value="EF-4"/>
</dbReference>
<dbReference type="InterPro" id="IPR035647">
    <property type="entry name" value="EFG_III/V"/>
</dbReference>
<dbReference type="InterPro" id="IPR000640">
    <property type="entry name" value="EFG_V-like"/>
</dbReference>
<dbReference type="InterPro" id="IPR004161">
    <property type="entry name" value="EFTu-like_2"/>
</dbReference>
<dbReference type="InterPro" id="IPR031157">
    <property type="entry name" value="G_TR_CS"/>
</dbReference>
<dbReference type="InterPro" id="IPR038363">
    <property type="entry name" value="LepA_C_sf"/>
</dbReference>
<dbReference type="InterPro" id="IPR013842">
    <property type="entry name" value="LepA_CTD"/>
</dbReference>
<dbReference type="InterPro" id="IPR035654">
    <property type="entry name" value="LepA_IV"/>
</dbReference>
<dbReference type="InterPro" id="IPR027417">
    <property type="entry name" value="P-loop_NTPase"/>
</dbReference>
<dbReference type="InterPro" id="IPR005225">
    <property type="entry name" value="Small_GTP-bd"/>
</dbReference>
<dbReference type="InterPro" id="IPR000795">
    <property type="entry name" value="T_Tr_GTP-bd_dom"/>
</dbReference>
<dbReference type="InterPro" id="IPR009000">
    <property type="entry name" value="Transl_B-barrel_sf"/>
</dbReference>
<dbReference type="NCBIfam" id="TIGR01393">
    <property type="entry name" value="lepA"/>
    <property type="match status" value="1"/>
</dbReference>
<dbReference type="NCBIfam" id="TIGR00231">
    <property type="entry name" value="small_GTP"/>
    <property type="match status" value="1"/>
</dbReference>
<dbReference type="PANTHER" id="PTHR43512:SF4">
    <property type="entry name" value="TRANSLATION FACTOR GUF1 HOMOLOG, CHLOROPLASTIC"/>
    <property type="match status" value="1"/>
</dbReference>
<dbReference type="PANTHER" id="PTHR43512">
    <property type="entry name" value="TRANSLATION FACTOR GUF1-RELATED"/>
    <property type="match status" value="1"/>
</dbReference>
<dbReference type="Pfam" id="PF00679">
    <property type="entry name" value="EFG_C"/>
    <property type="match status" value="1"/>
</dbReference>
<dbReference type="Pfam" id="PF00009">
    <property type="entry name" value="GTP_EFTU"/>
    <property type="match status" value="1"/>
</dbReference>
<dbReference type="Pfam" id="PF03144">
    <property type="entry name" value="GTP_EFTU_D2"/>
    <property type="match status" value="1"/>
</dbReference>
<dbReference type="Pfam" id="PF06421">
    <property type="entry name" value="LepA_C"/>
    <property type="match status" value="1"/>
</dbReference>
<dbReference type="PRINTS" id="PR00315">
    <property type="entry name" value="ELONGATNFCT"/>
</dbReference>
<dbReference type="SMART" id="SM00838">
    <property type="entry name" value="EFG_C"/>
    <property type="match status" value="1"/>
</dbReference>
<dbReference type="SUPFAM" id="SSF54980">
    <property type="entry name" value="EF-G C-terminal domain-like"/>
    <property type="match status" value="2"/>
</dbReference>
<dbReference type="SUPFAM" id="SSF52540">
    <property type="entry name" value="P-loop containing nucleoside triphosphate hydrolases"/>
    <property type="match status" value="1"/>
</dbReference>
<dbReference type="SUPFAM" id="SSF50447">
    <property type="entry name" value="Translation proteins"/>
    <property type="match status" value="1"/>
</dbReference>
<dbReference type="PROSITE" id="PS00301">
    <property type="entry name" value="G_TR_1"/>
    <property type="match status" value="1"/>
</dbReference>
<dbReference type="PROSITE" id="PS51722">
    <property type="entry name" value="G_TR_2"/>
    <property type="match status" value="1"/>
</dbReference>
<protein>
    <recommendedName>
        <fullName evidence="1">Elongation factor 4</fullName>
        <shortName evidence="1">EF-4</shortName>
        <ecNumber evidence="1">3.6.5.n1</ecNumber>
    </recommendedName>
    <alternativeName>
        <fullName evidence="1">Ribosomal back-translocase LepA</fullName>
    </alternativeName>
</protein>
<reference key="1">
    <citation type="journal article" date="2007" name="Environ. Microbiol.">
        <title>Whole-genome analysis of the ammonia-oxidizing bacterium, Nitrosomonas eutropha C91: implications for niche adaptation.</title>
        <authorList>
            <person name="Stein L.Y."/>
            <person name="Arp D.J."/>
            <person name="Berube P.M."/>
            <person name="Chain P.S."/>
            <person name="Hauser L."/>
            <person name="Jetten M.S."/>
            <person name="Klotz M.G."/>
            <person name="Larimer F.W."/>
            <person name="Norton J.M."/>
            <person name="Op den Camp H.J.M."/>
            <person name="Shin M."/>
            <person name="Wei X."/>
        </authorList>
    </citation>
    <scope>NUCLEOTIDE SEQUENCE [LARGE SCALE GENOMIC DNA]</scope>
    <source>
        <strain>DSM 101675 / C91 / Nm57</strain>
    </source>
</reference>
<organism>
    <name type="scientific">Nitrosomonas eutropha (strain DSM 101675 / C91 / Nm57)</name>
    <dbReference type="NCBI Taxonomy" id="335283"/>
    <lineage>
        <taxon>Bacteria</taxon>
        <taxon>Pseudomonadati</taxon>
        <taxon>Pseudomonadota</taxon>
        <taxon>Betaproteobacteria</taxon>
        <taxon>Nitrosomonadales</taxon>
        <taxon>Nitrosomonadaceae</taxon>
        <taxon>Nitrosomonas</taxon>
    </lineage>
</organism>
<gene>
    <name evidence="1" type="primary">lepA</name>
    <name type="ordered locus">Neut_1781</name>
</gene>